<protein>
    <recommendedName>
        <fullName evidence="1">Ribosome-recycling factor</fullName>
        <shortName evidence="1">RRF</shortName>
    </recommendedName>
    <alternativeName>
        <fullName evidence="1">Ribosome-releasing factor</fullName>
    </alternativeName>
</protein>
<organism>
    <name type="scientific">Borreliella burgdorferi (strain ZS7)</name>
    <name type="common">Borrelia burgdorferi</name>
    <dbReference type="NCBI Taxonomy" id="445985"/>
    <lineage>
        <taxon>Bacteria</taxon>
        <taxon>Pseudomonadati</taxon>
        <taxon>Spirochaetota</taxon>
        <taxon>Spirochaetia</taxon>
        <taxon>Spirochaetales</taxon>
        <taxon>Borreliaceae</taxon>
        <taxon>Borreliella</taxon>
    </lineage>
</organism>
<dbReference type="EMBL" id="CP001205">
    <property type="protein sequence ID" value="ACK74559.1"/>
    <property type="molecule type" value="Genomic_DNA"/>
</dbReference>
<dbReference type="RefSeq" id="WP_011600840.1">
    <property type="nucleotide sequence ID" value="NC_011728.1"/>
</dbReference>
<dbReference type="SMR" id="B7J154"/>
<dbReference type="GeneID" id="77264963"/>
<dbReference type="KEGG" id="bbz:BbuZS7_0121"/>
<dbReference type="HOGENOM" id="CLU_073981_2_0_12"/>
<dbReference type="Proteomes" id="UP000006901">
    <property type="component" value="Chromosome"/>
</dbReference>
<dbReference type="GO" id="GO:0005737">
    <property type="term" value="C:cytoplasm"/>
    <property type="evidence" value="ECO:0007669"/>
    <property type="project" value="UniProtKB-SubCell"/>
</dbReference>
<dbReference type="GO" id="GO:0043023">
    <property type="term" value="F:ribosomal large subunit binding"/>
    <property type="evidence" value="ECO:0007669"/>
    <property type="project" value="TreeGrafter"/>
</dbReference>
<dbReference type="GO" id="GO:0006415">
    <property type="term" value="P:translational termination"/>
    <property type="evidence" value="ECO:0007669"/>
    <property type="project" value="UniProtKB-UniRule"/>
</dbReference>
<dbReference type="CDD" id="cd00520">
    <property type="entry name" value="RRF"/>
    <property type="match status" value="1"/>
</dbReference>
<dbReference type="FunFam" id="1.10.132.20:FF:000001">
    <property type="entry name" value="Ribosome-recycling factor"/>
    <property type="match status" value="1"/>
</dbReference>
<dbReference type="FunFam" id="3.30.1360.40:FF:000001">
    <property type="entry name" value="Ribosome-recycling factor"/>
    <property type="match status" value="1"/>
</dbReference>
<dbReference type="Gene3D" id="3.30.1360.40">
    <property type="match status" value="1"/>
</dbReference>
<dbReference type="Gene3D" id="1.10.132.20">
    <property type="entry name" value="Ribosome-recycling factor"/>
    <property type="match status" value="1"/>
</dbReference>
<dbReference type="HAMAP" id="MF_00040">
    <property type="entry name" value="RRF"/>
    <property type="match status" value="1"/>
</dbReference>
<dbReference type="InterPro" id="IPR002661">
    <property type="entry name" value="Ribosome_recyc_fac"/>
</dbReference>
<dbReference type="InterPro" id="IPR023584">
    <property type="entry name" value="Ribosome_recyc_fac_dom"/>
</dbReference>
<dbReference type="InterPro" id="IPR036191">
    <property type="entry name" value="RRF_sf"/>
</dbReference>
<dbReference type="NCBIfam" id="TIGR00496">
    <property type="entry name" value="frr"/>
    <property type="match status" value="1"/>
</dbReference>
<dbReference type="PANTHER" id="PTHR20982:SF3">
    <property type="entry name" value="MITOCHONDRIAL RIBOSOME RECYCLING FACTOR PSEUDO 1"/>
    <property type="match status" value="1"/>
</dbReference>
<dbReference type="PANTHER" id="PTHR20982">
    <property type="entry name" value="RIBOSOME RECYCLING FACTOR"/>
    <property type="match status" value="1"/>
</dbReference>
<dbReference type="Pfam" id="PF01765">
    <property type="entry name" value="RRF"/>
    <property type="match status" value="1"/>
</dbReference>
<dbReference type="SUPFAM" id="SSF55194">
    <property type="entry name" value="Ribosome recycling factor, RRF"/>
    <property type="match status" value="1"/>
</dbReference>
<accession>B7J154</accession>
<comment type="function">
    <text evidence="1">Responsible for the release of ribosomes from messenger RNA at the termination of protein biosynthesis. May increase the efficiency of translation by recycling ribosomes from one round of translation to another.</text>
</comment>
<comment type="subcellular location">
    <subcellularLocation>
        <location evidence="1">Cytoplasm</location>
    </subcellularLocation>
</comment>
<comment type="similarity">
    <text evidence="1">Belongs to the RRF family.</text>
</comment>
<proteinExistence type="inferred from homology"/>
<sequence length="184" mass="21350">MEDYKAFLDEKMSKVLLSLDNEYKTLRTGRISSNIFDKIFIQYHGQRTPITQVSSIRIPEARLVVIQPWDKTILNKIEQAILNSDLSMNPSSDGSVIRIKVPALTSERRQDIVKHAKKIAEEHKISTRNIRQDLNNKVKKQEKESEITEDSLKRILDDIQKSTDIYIKKIDAILESKIQEIMEV</sequence>
<name>RRF_BORBZ</name>
<reference key="1">
    <citation type="journal article" date="2011" name="J. Bacteriol.">
        <title>Whole-genome sequences of thirteen isolates of Borrelia burgdorferi.</title>
        <authorList>
            <person name="Schutzer S.E."/>
            <person name="Fraser-Liggett C.M."/>
            <person name="Casjens S.R."/>
            <person name="Qiu W.G."/>
            <person name="Dunn J.J."/>
            <person name="Mongodin E.F."/>
            <person name="Luft B.J."/>
        </authorList>
    </citation>
    <scope>NUCLEOTIDE SEQUENCE [LARGE SCALE GENOMIC DNA]</scope>
    <source>
        <strain>ZS7</strain>
    </source>
</reference>
<keyword id="KW-0963">Cytoplasm</keyword>
<keyword id="KW-0648">Protein biosynthesis</keyword>
<feature type="chain" id="PRO_1000194902" description="Ribosome-recycling factor">
    <location>
        <begin position="1"/>
        <end position="184"/>
    </location>
</feature>
<gene>
    <name evidence="1" type="primary">frr</name>
    <name type="ordered locus">BbuZS7_0121</name>
</gene>
<evidence type="ECO:0000255" key="1">
    <source>
        <dbReference type="HAMAP-Rule" id="MF_00040"/>
    </source>
</evidence>